<reference key="1">
    <citation type="journal article" date="2010" name="Fertil. Steril.">
        <title>Immunization with a DNA vaccine of testis-specific sodium-hydrogen exchanger by oral feeding or nasal instillation reduces fertility in female mice.</title>
        <authorList>
            <person name="Liu T."/>
            <person name="Huang J.C."/>
            <person name="Lu C.L."/>
            <person name="Yang J.L."/>
            <person name="Hu Z.Y."/>
            <person name="Gao F."/>
            <person name="Liu Y.X."/>
        </authorList>
    </citation>
    <scope>NUCLEOTIDE SEQUENCE [MRNA] (ISOFORM 1)</scope>
    <scope>TISSUE SPECIFICITY</scope>
    <scope>FUNCTION</scope>
    <scope>SUBCELLULAR LOCATION</scope>
</reference>
<reference key="2">
    <citation type="journal article" date="2005" name="Science">
        <title>The transcriptional landscape of the mammalian genome.</title>
        <authorList>
            <person name="Carninci P."/>
            <person name="Kasukawa T."/>
            <person name="Katayama S."/>
            <person name="Gough J."/>
            <person name="Frith M.C."/>
            <person name="Maeda N."/>
            <person name="Oyama R."/>
            <person name="Ravasi T."/>
            <person name="Lenhard B."/>
            <person name="Wells C."/>
            <person name="Kodzius R."/>
            <person name="Shimokawa K."/>
            <person name="Bajic V.B."/>
            <person name="Brenner S.E."/>
            <person name="Batalov S."/>
            <person name="Forrest A.R."/>
            <person name="Zavolan M."/>
            <person name="Davis M.J."/>
            <person name="Wilming L.G."/>
            <person name="Aidinis V."/>
            <person name="Allen J.E."/>
            <person name="Ambesi-Impiombato A."/>
            <person name="Apweiler R."/>
            <person name="Aturaliya R.N."/>
            <person name="Bailey T.L."/>
            <person name="Bansal M."/>
            <person name="Baxter L."/>
            <person name="Beisel K.W."/>
            <person name="Bersano T."/>
            <person name="Bono H."/>
            <person name="Chalk A.M."/>
            <person name="Chiu K.P."/>
            <person name="Choudhary V."/>
            <person name="Christoffels A."/>
            <person name="Clutterbuck D.R."/>
            <person name="Crowe M.L."/>
            <person name="Dalla E."/>
            <person name="Dalrymple B.P."/>
            <person name="de Bono B."/>
            <person name="Della Gatta G."/>
            <person name="di Bernardo D."/>
            <person name="Down T."/>
            <person name="Engstrom P."/>
            <person name="Fagiolini M."/>
            <person name="Faulkner G."/>
            <person name="Fletcher C.F."/>
            <person name="Fukushima T."/>
            <person name="Furuno M."/>
            <person name="Futaki S."/>
            <person name="Gariboldi M."/>
            <person name="Georgii-Hemming P."/>
            <person name="Gingeras T.R."/>
            <person name="Gojobori T."/>
            <person name="Green R.E."/>
            <person name="Gustincich S."/>
            <person name="Harbers M."/>
            <person name="Hayashi Y."/>
            <person name="Hensch T.K."/>
            <person name="Hirokawa N."/>
            <person name="Hill D."/>
            <person name="Huminiecki L."/>
            <person name="Iacono M."/>
            <person name="Ikeo K."/>
            <person name="Iwama A."/>
            <person name="Ishikawa T."/>
            <person name="Jakt M."/>
            <person name="Kanapin A."/>
            <person name="Katoh M."/>
            <person name="Kawasawa Y."/>
            <person name="Kelso J."/>
            <person name="Kitamura H."/>
            <person name="Kitano H."/>
            <person name="Kollias G."/>
            <person name="Krishnan S.P."/>
            <person name="Kruger A."/>
            <person name="Kummerfeld S.K."/>
            <person name="Kurochkin I.V."/>
            <person name="Lareau L.F."/>
            <person name="Lazarevic D."/>
            <person name="Lipovich L."/>
            <person name="Liu J."/>
            <person name="Liuni S."/>
            <person name="McWilliam S."/>
            <person name="Madan Babu M."/>
            <person name="Madera M."/>
            <person name="Marchionni L."/>
            <person name="Matsuda H."/>
            <person name="Matsuzawa S."/>
            <person name="Miki H."/>
            <person name="Mignone F."/>
            <person name="Miyake S."/>
            <person name="Morris K."/>
            <person name="Mottagui-Tabar S."/>
            <person name="Mulder N."/>
            <person name="Nakano N."/>
            <person name="Nakauchi H."/>
            <person name="Ng P."/>
            <person name="Nilsson R."/>
            <person name="Nishiguchi S."/>
            <person name="Nishikawa S."/>
            <person name="Nori F."/>
            <person name="Ohara O."/>
            <person name="Okazaki Y."/>
            <person name="Orlando V."/>
            <person name="Pang K.C."/>
            <person name="Pavan W.J."/>
            <person name="Pavesi G."/>
            <person name="Pesole G."/>
            <person name="Petrovsky N."/>
            <person name="Piazza S."/>
            <person name="Reed J."/>
            <person name="Reid J.F."/>
            <person name="Ring B.Z."/>
            <person name="Ringwald M."/>
            <person name="Rost B."/>
            <person name="Ruan Y."/>
            <person name="Salzberg S.L."/>
            <person name="Sandelin A."/>
            <person name="Schneider C."/>
            <person name="Schoenbach C."/>
            <person name="Sekiguchi K."/>
            <person name="Semple C.A."/>
            <person name="Seno S."/>
            <person name="Sessa L."/>
            <person name="Sheng Y."/>
            <person name="Shibata Y."/>
            <person name="Shimada H."/>
            <person name="Shimada K."/>
            <person name="Silva D."/>
            <person name="Sinclair B."/>
            <person name="Sperling S."/>
            <person name="Stupka E."/>
            <person name="Sugiura K."/>
            <person name="Sultana R."/>
            <person name="Takenaka Y."/>
            <person name="Taki K."/>
            <person name="Tammoja K."/>
            <person name="Tan S.L."/>
            <person name="Tang S."/>
            <person name="Taylor M.S."/>
            <person name="Tegner J."/>
            <person name="Teichmann S.A."/>
            <person name="Ueda H.R."/>
            <person name="van Nimwegen E."/>
            <person name="Verardo R."/>
            <person name="Wei C.L."/>
            <person name="Yagi K."/>
            <person name="Yamanishi H."/>
            <person name="Zabarovsky E."/>
            <person name="Zhu S."/>
            <person name="Zimmer A."/>
            <person name="Hide W."/>
            <person name="Bult C."/>
            <person name="Grimmond S.M."/>
            <person name="Teasdale R.D."/>
            <person name="Liu E.T."/>
            <person name="Brusic V."/>
            <person name="Quackenbush J."/>
            <person name="Wahlestedt C."/>
            <person name="Mattick J.S."/>
            <person name="Hume D.A."/>
            <person name="Kai C."/>
            <person name="Sasaki D."/>
            <person name="Tomaru Y."/>
            <person name="Fukuda S."/>
            <person name="Kanamori-Katayama M."/>
            <person name="Suzuki M."/>
            <person name="Aoki J."/>
            <person name="Arakawa T."/>
            <person name="Iida J."/>
            <person name="Imamura K."/>
            <person name="Itoh M."/>
            <person name="Kato T."/>
            <person name="Kawaji H."/>
            <person name="Kawagashira N."/>
            <person name="Kawashima T."/>
            <person name="Kojima M."/>
            <person name="Kondo S."/>
            <person name="Konno H."/>
            <person name="Nakano K."/>
            <person name="Ninomiya N."/>
            <person name="Nishio T."/>
            <person name="Okada M."/>
            <person name="Plessy C."/>
            <person name="Shibata K."/>
            <person name="Shiraki T."/>
            <person name="Suzuki S."/>
            <person name="Tagami M."/>
            <person name="Waki K."/>
            <person name="Watahiki A."/>
            <person name="Okamura-Oho Y."/>
            <person name="Suzuki H."/>
            <person name="Kawai J."/>
            <person name="Hayashizaki Y."/>
        </authorList>
    </citation>
    <scope>NUCLEOTIDE SEQUENCE [LARGE SCALE MRNA] (ISOFORMS 1; 2; 4 AND 5)</scope>
    <source>
        <strain>C57BL/6J</strain>
        <tissue>Testis</tissue>
    </source>
</reference>
<reference key="3">
    <citation type="journal article" date="2004" name="Genome Res.">
        <title>The status, quality, and expansion of the NIH full-length cDNA project: the Mammalian Gene Collection (MGC).</title>
        <authorList>
            <consortium name="The MGC Project Team"/>
        </authorList>
    </citation>
    <scope>NUCLEOTIDE SEQUENCE [LARGE SCALE MRNA] (ISOFORM 3)</scope>
    <source>
        <strain>Czech II</strain>
        <tissue>Mammary tumor</tissue>
    </source>
</reference>
<reference key="4">
    <citation type="journal article" date="2010" name="Front. Biosci.">
        <title>A novel testis-specific Na+/H+ exchanger is involved in sperm motility and fertility.</title>
        <authorList>
            <person name="Liu T."/>
            <person name="Huang J.C."/>
            <person name="Zuo W.L."/>
            <person name="Lu C.L."/>
            <person name="Chen M."/>
            <person name="Zhang X.S."/>
            <person name="Li Y.C."/>
            <person name="Cai H."/>
            <person name="Zhou W.L."/>
            <person name="Hu Z.Y."/>
            <person name="Gao F."/>
            <person name="Liu Y.X."/>
        </authorList>
    </citation>
    <scope>TISSUE SPECIFICITY</scope>
    <scope>FUNCTION</scope>
</reference>
<reference key="5">
    <citation type="journal article" date="2016" name="Cell Death Dis.">
        <title>Sodium-hydrogen exchanger NHA1 and NHA2 control sperm motility and male fertility.</title>
        <authorList>
            <person name="Chen S.R."/>
            <person name="Chen M."/>
            <person name="Deng S.L."/>
            <person name="Hao X.X."/>
            <person name="Wang X.X."/>
            <person name="Liu Y.X."/>
        </authorList>
    </citation>
    <scope>SUBCELLULAR LOCATION</scope>
    <scope>DISRUPTION PHENOTYPE</scope>
    <scope>FUNCTION</scope>
</reference>
<dbReference type="EMBL" id="EU846100">
    <property type="protein sequence ID" value="ACF60498.1"/>
    <property type="molecule type" value="mRNA"/>
</dbReference>
<dbReference type="EMBL" id="AK007064">
    <property type="protein sequence ID" value="BAB24849.1"/>
    <property type="molecule type" value="mRNA"/>
</dbReference>
<dbReference type="EMBL" id="AK015318">
    <property type="protein sequence ID" value="BAB29794.1"/>
    <property type="molecule type" value="mRNA"/>
</dbReference>
<dbReference type="EMBL" id="AK016883">
    <property type="protein sequence ID" value="BAC25498.1"/>
    <property type="molecule type" value="mRNA"/>
</dbReference>
<dbReference type="EMBL" id="AK016917">
    <property type="protein sequence ID" value="BAB30495.1"/>
    <property type="molecule type" value="mRNA"/>
</dbReference>
<dbReference type="EMBL" id="AK029525">
    <property type="protein sequence ID" value="BAC26494.1"/>
    <property type="molecule type" value="mRNA"/>
</dbReference>
<dbReference type="EMBL" id="BC025002">
    <property type="protein sequence ID" value="AAH25002.1"/>
    <property type="molecule type" value="mRNA"/>
</dbReference>
<dbReference type="CCDS" id="CCDS17855.2">
    <molecule id="Q8C0X2-1"/>
</dbReference>
<dbReference type="RefSeq" id="XP_006502267.1">
    <property type="nucleotide sequence ID" value="XM_006502204.1"/>
</dbReference>
<dbReference type="SMR" id="Q8C0X2"/>
<dbReference type="FunCoup" id="Q8C0X2">
    <property type="interactions" value="6"/>
</dbReference>
<dbReference type="STRING" id="10090.ENSMUSP00000077644"/>
<dbReference type="iPTMnet" id="Q8C0X2"/>
<dbReference type="PhosphoSitePlus" id="Q8C0X2"/>
<dbReference type="PaxDb" id="10090-ENSMUSP00000077644"/>
<dbReference type="ProteomicsDB" id="261062">
    <molecule id="Q8C0X2-1"/>
</dbReference>
<dbReference type="ProteomicsDB" id="261063">
    <molecule id="Q8C0X2-2"/>
</dbReference>
<dbReference type="ProteomicsDB" id="261064">
    <molecule id="Q8C0X2-3"/>
</dbReference>
<dbReference type="ProteomicsDB" id="261065">
    <molecule id="Q8C0X2-4"/>
</dbReference>
<dbReference type="ProteomicsDB" id="261066">
    <molecule id="Q8C0X2-5"/>
</dbReference>
<dbReference type="UCSC" id="uc008rlf.1">
    <molecule id="Q8C0X2-4"/>
    <property type="organism name" value="mouse"/>
</dbReference>
<dbReference type="UCSC" id="uc008rlj.3">
    <molecule id="Q8C0X2-3"/>
    <property type="organism name" value="mouse"/>
</dbReference>
<dbReference type="AGR" id="MGI:1921696"/>
<dbReference type="MGI" id="MGI:1921696">
    <property type="gene designation" value="Slc9b1"/>
</dbReference>
<dbReference type="eggNOG" id="KOG3826">
    <property type="taxonomic scope" value="Eukaryota"/>
</dbReference>
<dbReference type="InParanoid" id="Q8C0X2"/>
<dbReference type="PhylomeDB" id="Q8C0X2"/>
<dbReference type="Reactome" id="R-MMU-2672351">
    <property type="pathway name" value="Stimuli-sensing channels"/>
</dbReference>
<dbReference type="BioGRID-ORCS" id="74446">
    <property type="hits" value="3 hits in 78 CRISPR screens"/>
</dbReference>
<dbReference type="ChiTaRS" id="Slc9b1">
    <property type="organism name" value="mouse"/>
</dbReference>
<dbReference type="PRO" id="PR:Q8C0X2"/>
<dbReference type="Proteomes" id="UP000000589">
    <property type="component" value="Unplaced"/>
</dbReference>
<dbReference type="RNAct" id="Q8C0X2">
    <property type="molecule type" value="protein"/>
</dbReference>
<dbReference type="GO" id="GO:0005886">
    <property type="term" value="C:plasma membrane"/>
    <property type="evidence" value="ECO:0007669"/>
    <property type="project" value="UniProtKB-KW"/>
</dbReference>
<dbReference type="GO" id="GO:0097228">
    <property type="term" value="C:sperm principal piece"/>
    <property type="evidence" value="ECO:0000314"/>
    <property type="project" value="UniProtKB"/>
</dbReference>
<dbReference type="GO" id="GO:0015297">
    <property type="term" value="F:antiporter activity"/>
    <property type="evidence" value="ECO:0007669"/>
    <property type="project" value="UniProtKB-KW"/>
</dbReference>
<dbReference type="GO" id="GO:0030317">
    <property type="term" value="P:flagellated sperm motility"/>
    <property type="evidence" value="ECO:0000315"/>
    <property type="project" value="UniProtKB"/>
</dbReference>
<dbReference type="GO" id="GO:1902600">
    <property type="term" value="P:proton transmembrane transport"/>
    <property type="evidence" value="ECO:0007669"/>
    <property type="project" value="InterPro"/>
</dbReference>
<dbReference type="GO" id="GO:0051453">
    <property type="term" value="P:regulation of intracellular pH"/>
    <property type="evidence" value="ECO:0000315"/>
    <property type="project" value="UniProtKB"/>
</dbReference>
<dbReference type="GO" id="GO:0007338">
    <property type="term" value="P:single fertilization"/>
    <property type="evidence" value="ECO:0007669"/>
    <property type="project" value="UniProtKB-KW"/>
</dbReference>
<dbReference type="GO" id="GO:0006814">
    <property type="term" value="P:sodium ion transport"/>
    <property type="evidence" value="ECO:0007669"/>
    <property type="project" value="UniProtKB-KW"/>
</dbReference>
<dbReference type="FunFam" id="1.20.1530.20:FF:000012">
    <property type="entry name" value="sodium/hydrogen exchanger 9B2 isoform X1"/>
    <property type="match status" value="1"/>
</dbReference>
<dbReference type="InterPro" id="IPR006153">
    <property type="entry name" value="Cation/H_exchanger_TM"/>
</dbReference>
<dbReference type="InterPro" id="IPR051843">
    <property type="entry name" value="CPA1_transporter"/>
</dbReference>
<dbReference type="PANTHER" id="PTHR31102">
    <property type="match status" value="1"/>
</dbReference>
<dbReference type="PANTHER" id="PTHR31102:SF5">
    <property type="entry name" value="SLC9B1-LIKE PROTEIN SLC9B1P1-RELATED"/>
    <property type="match status" value="1"/>
</dbReference>
<dbReference type="Pfam" id="PF00999">
    <property type="entry name" value="Na_H_Exchanger"/>
    <property type="match status" value="1"/>
</dbReference>
<accession>Q8C0X2</accession>
<accession>B5AFL0</accession>
<accession>Q8C1I8</accession>
<accession>Q8R3N0</accession>
<accession>Q9CPR9</accession>
<accession>Q9D400</accession>
<protein>
    <recommendedName>
        <fullName>Sodium/hydrogen exchanger 9B1</fullName>
    </recommendedName>
    <alternativeName>
        <fullName>Na(+)/H(+) exchanger-like domain-containing protein 1</fullName>
        <shortName>NHE domain-containing protein 1</shortName>
    </alternativeName>
    <alternativeName>
        <fullName>Sodium/hydrogen exchanger-like domain-containing protein 1</fullName>
    </alternativeName>
    <alternativeName>
        <fullName>Solute carrier family 9 subfamily B member 1</fullName>
    </alternativeName>
    <alternativeName>
        <fullName evidence="8 9">Testis specific sodium-hydrogen exchanger</fullName>
        <shortName evidence="8 9">MtsNHE</shortName>
    </alternativeName>
</protein>
<organism>
    <name type="scientific">Mus musculus</name>
    <name type="common">Mouse</name>
    <dbReference type="NCBI Taxonomy" id="10090"/>
    <lineage>
        <taxon>Eukaryota</taxon>
        <taxon>Metazoa</taxon>
        <taxon>Chordata</taxon>
        <taxon>Craniata</taxon>
        <taxon>Vertebrata</taxon>
        <taxon>Euteleostomi</taxon>
        <taxon>Mammalia</taxon>
        <taxon>Eutheria</taxon>
        <taxon>Euarchontoglires</taxon>
        <taxon>Glires</taxon>
        <taxon>Rodentia</taxon>
        <taxon>Myomorpha</taxon>
        <taxon>Muroidea</taxon>
        <taxon>Muridae</taxon>
        <taxon>Murinae</taxon>
        <taxon>Mus</taxon>
        <taxon>Mus</taxon>
    </lineage>
</organism>
<proteinExistence type="evidence at protein level"/>
<sequence>MSEHDVESNKKDDGFQSSVTVEMSKDPDSFHEETVEPKPELKEPEPKEPEPKEPERKEPERKEPERKEPERKEPERKVPGRRETQTKETQTTEIERKETKKKRGTNSYCPPQGTINKTITDGAALIALWTLLWALIGQEVLPGGNLFGLVVIFYSAFLGGKILEFIKIPVVPPLPPLIGMLLAGFTIRNVPIIYEFVHIPTTWSSALRNTALTIILVRAGLGLDPQALKHLKGVCLRLSFGPCFLEACSAALFSHFIMNFPWQWGFLLGFVLGAVSPAVVVPNMLMLQENGYGVEKGIPTLLVAASSMDDIVAITGFNTFLSIVFSSGSVISNILSSLRDVLIGVLVGIVMGVFVQYFPSGDQERLTQRRAFLVLSMCISAVLGCQHIGLHGSGGLVTLVLSFMAAKRWAEEKVGIQKIVANTWNVFQPLLFGLVGTEVSVESLESKTIGMCLATLGLALSVRILSTFVLMSFANFRFKEKVFIALSWIPKATVQAVLGPLALETARVMAPHLEGYAKAVMTVAFLAILITAPNGALLIGILGPKILEQSEVTFPLKVELSNFHH</sequence>
<comment type="function">
    <text evidence="3 4 5">Sperm-specific Na(+)/H(+) exchanger involved in intracellular pH regulation of spermatozoa (PubMed:20036903). Involved in sperm motility and fertility (PubMed:19409551, PubMed:20036903, PubMed:27010853).</text>
</comment>
<comment type="subcellular location">
    <subcellularLocation>
        <location evidence="3 4 5">Cell projection</location>
        <location evidence="3 4 5">Cilium</location>
        <location evidence="3 4 5">Flagellum membrane</location>
        <topology evidence="11">Multi-pass membrane protein</topology>
    </subcellularLocation>
</comment>
<comment type="alternative products">
    <event type="alternative splicing"/>
    <isoform>
        <id>Q8C0X2-1</id>
        <name>1</name>
        <sequence type="displayed"/>
    </isoform>
    <isoform>
        <id>Q8C0X2-2</id>
        <name>2</name>
        <sequence type="described" ref="VSP_030186 VSP_030187"/>
    </isoform>
    <isoform>
        <id>Q8C0X2-3</id>
        <name>3</name>
        <sequence type="described" ref="VSP_030185"/>
    </isoform>
    <isoform>
        <id>Q8C0X2-4</id>
        <name>4</name>
        <sequence type="described" ref="VSP_030183 VSP_030184"/>
    </isoform>
    <isoform>
        <id>Q8C0X2-5</id>
        <name>5</name>
        <sequence type="described" ref="VSP_030181 VSP_030182"/>
    </isoform>
</comment>
<comment type="tissue specificity">
    <text evidence="3 4 5">Testis-specific (PubMed:20036903). Expressed in the spermatids and spermatozoa (at protein level) (PubMed:20036903). Specifically present in the principal piece of sperm tail (at protein level) (PubMed:19409551, PubMed:20036903, PubMed:27010853).</text>
</comment>
<comment type="disruption phenotype">
    <text evidence="5">Mice are normal but males shown reduced fertility caused by diminished sperm motility (PubMed:27010853). Addition of cAMP analogs almost completely rescue the motility and infertility phenotypes in vitro (PubMed:27010853). Double knockout of SLC9B1 and SLC9B2 results in male infertility with a severe sperm mobility reduction, indicating that these two gene are functionally redundant (PubMed:27010853).</text>
</comment>
<comment type="similarity">
    <text evidence="11">Belongs to the monovalent cation:proton antiporter 1 (CPA1) transporter (TC 2.A.36) family.</text>
</comment>
<keyword id="KW-0025">Alternative splicing</keyword>
<keyword id="KW-0050">Antiport</keyword>
<keyword id="KW-1003">Cell membrane</keyword>
<keyword id="KW-0966">Cell projection</keyword>
<keyword id="KW-0969">Cilium</keyword>
<keyword id="KW-0278">Fertilization</keyword>
<keyword id="KW-0282">Flagellum</keyword>
<keyword id="KW-0406">Ion transport</keyword>
<keyword id="KW-0472">Membrane</keyword>
<keyword id="KW-1185">Reference proteome</keyword>
<keyword id="KW-0915">Sodium</keyword>
<keyword id="KW-0739">Sodium transport</keyword>
<keyword id="KW-0812">Transmembrane</keyword>
<keyword id="KW-1133">Transmembrane helix</keyword>
<keyword id="KW-0813">Transport</keyword>
<feature type="chain" id="PRO_0000314009" description="Sodium/hydrogen exchanger 9B1">
    <location>
        <begin position="1"/>
        <end position="565"/>
    </location>
</feature>
<feature type="transmembrane region" description="Helical" evidence="1">
    <location>
        <begin position="122"/>
        <end position="142"/>
    </location>
</feature>
<feature type="transmembrane region" description="Helical" evidence="1">
    <location>
        <begin position="146"/>
        <end position="166"/>
    </location>
</feature>
<feature type="transmembrane region" description="Helical" evidence="1">
    <location>
        <begin position="167"/>
        <end position="187"/>
    </location>
</feature>
<feature type="transmembrane region" description="Helical" evidence="1">
    <location>
        <begin position="206"/>
        <end position="223"/>
    </location>
</feature>
<feature type="transmembrane region" description="Helical" evidence="1">
    <location>
        <begin position="238"/>
        <end position="258"/>
    </location>
</feature>
<feature type="transmembrane region" description="Helical" evidence="1">
    <location>
        <begin position="266"/>
        <end position="286"/>
    </location>
</feature>
<feature type="transmembrane region" description="Helical" evidence="1">
    <location>
        <begin position="311"/>
        <end position="331"/>
    </location>
</feature>
<feature type="transmembrane region" description="Helical" evidence="1">
    <location>
        <begin position="341"/>
        <end position="361"/>
    </location>
</feature>
<feature type="transmembrane region" description="Helical" evidence="1">
    <location>
        <begin position="371"/>
        <end position="391"/>
    </location>
</feature>
<feature type="transmembrane region" description="Helical" evidence="1">
    <location>
        <begin position="419"/>
        <end position="439"/>
    </location>
</feature>
<feature type="transmembrane region" description="Helical" evidence="1">
    <location>
        <begin position="449"/>
        <end position="469"/>
    </location>
</feature>
<feature type="transmembrane region" description="Helical" evidence="1">
    <location>
        <begin position="482"/>
        <end position="502"/>
    </location>
</feature>
<feature type="transmembrane region" description="Helical" evidence="1">
    <location>
        <begin position="523"/>
        <end position="543"/>
    </location>
</feature>
<feature type="region of interest" description="Disordered" evidence="2">
    <location>
        <begin position="1"/>
        <end position="112"/>
    </location>
</feature>
<feature type="compositionally biased region" description="Basic and acidic residues" evidence="2">
    <location>
        <begin position="1"/>
        <end position="14"/>
    </location>
</feature>
<feature type="compositionally biased region" description="Basic and acidic residues" evidence="2">
    <location>
        <begin position="23"/>
        <end position="86"/>
    </location>
</feature>
<feature type="splice variant" id="VSP_030181" description="In isoform 5." evidence="7">
    <original>KVPGRRETQTKETQTTEIERKETKKKRGTNSYCPPQGT</original>
    <variation>SCTHCTMDSTLGPYRSRSSPWWKFVWTCSYFLQCFPWG</variation>
    <location>
        <begin position="77"/>
        <end position="114"/>
    </location>
</feature>
<feature type="splice variant" id="VSP_030182" description="In isoform 5." evidence="7">
    <location>
        <begin position="115"/>
        <end position="565"/>
    </location>
</feature>
<feature type="splice variant" id="VSP_030183" description="In isoform 4." evidence="7">
    <original>AALIALWTLLWALIGQEVLPGGN</original>
    <variation>MSNKKCTWGENEKYKMQMIRLTV</variation>
    <location>
        <begin position="123"/>
        <end position="145"/>
    </location>
</feature>
<feature type="splice variant" id="VSP_030184" description="In isoform 4." evidence="7">
    <location>
        <begin position="146"/>
        <end position="565"/>
    </location>
</feature>
<feature type="splice variant" id="VSP_030185" description="In isoform 3." evidence="6">
    <location>
        <begin position="270"/>
        <end position="565"/>
    </location>
</feature>
<feature type="splice variant" id="VSP_030186" description="In isoform 2." evidence="7">
    <original>ERLTQRRAFLVLSMC</original>
    <variation>AASTLAYMDLEDWSH</variation>
    <location>
        <begin position="364"/>
        <end position="378"/>
    </location>
</feature>
<feature type="splice variant" id="VSP_030187" description="In isoform 2." evidence="7">
    <location>
        <begin position="379"/>
        <end position="565"/>
    </location>
</feature>
<feature type="sequence conflict" description="In Ref. 2; BAB30495 and 3; AAH25002." evidence="11" ref="2 3">
    <original>K</original>
    <variation>R</variation>
    <location>
        <position position="167"/>
    </location>
</feature>
<feature type="sequence conflict" description="In Ref. 2; BAC25498." evidence="11" ref="2">
    <original>Q</original>
    <variation>G</variation>
    <location>
        <position position="263"/>
    </location>
</feature>
<gene>
    <name evidence="12" type="primary">Slc9b1</name>
    <name evidence="10" type="synonym">Nha1</name>
    <name type="synonym">Nhedc1</name>
</gene>
<name>SL9B1_MOUSE</name>
<evidence type="ECO:0000255" key="1"/>
<evidence type="ECO:0000256" key="2">
    <source>
        <dbReference type="SAM" id="MobiDB-lite"/>
    </source>
</evidence>
<evidence type="ECO:0000269" key="3">
    <source>
    </source>
</evidence>
<evidence type="ECO:0000269" key="4">
    <source>
    </source>
</evidence>
<evidence type="ECO:0000269" key="5">
    <source>
    </source>
</evidence>
<evidence type="ECO:0000303" key="6">
    <source>
    </source>
</evidence>
<evidence type="ECO:0000303" key="7">
    <source>
    </source>
</evidence>
<evidence type="ECO:0000303" key="8">
    <source>
    </source>
</evidence>
<evidence type="ECO:0000303" key="9">
    <source>
    </source>
</evidence>
<evidence type="ECO:0000303" key="10">
    <source>
    </source>
</evidence>
<evidence type="ECO:0000305" key="11"/>
<evidence type="ECO:0000312" key="12">
    <source>
        <dbReference type="MGI" id="MGI:1921696"/>
    </source>
</evidence>